<feature type="chain" id="PRO_0000435686" description="Acylamino-acid-releasing enzyme 1">
    <location>
        <begin position="1"/>
        <end position="775"/>
    </location>
</feature>
<feature type="active site" description="Charge relay system" evidence="2">
    <location>
        <position position="627"/>
    </location>
</feature>
<feature type="active site" description="Charge relay system" evidence="2">
    <location>
        <position position="718"/>
    </location>
</feature>
<feature type="active site" description="Charge relay system" evidence="2">
    <location>
        <position position="750"/>
    </location>
</feature>
<name>AARE1_ORYSJ</name>
<dbReference type="EC" id="3.4.19.1" evidence="3"/>
<dbReference type="EMBL" id="DP000086">
    <property type="protein sequence ID" value="ABB47613.1"/>
    <property type="status" value="ALT_SEQ"/>
    <property type="molecule type" value="Genomic_DNA"/>
</dbReference>
<dbReference type="EMBL" id="AP008216">
    <property type="protein sequence ID" value="BAF26516.1"/>
    <property type="molecule type" value="Genomic_DNA"/>
</dbReference>
<dbReference type="EMBL" id="AP014966">
    <property type="protein sequence ID" value="BAT10848.1"/>
    <property type="status" value="ALT_SEQ"/>
    <property type="molecule type" value="Genomic_DNA"/>
</dbReference>
<dbReference type="EMBL" id="CM000147">
    <property type="protein sequence ID" value="EEE50961.1"/>
    <property type="status" value="ALT_SEQ"/>
    <property type="molecule type" value="Genomic_DNA"/>
</dbReference>
<dbReference type="RefSeq" id="XP_015614198.1">
    <property type="nucleotide sequence ID" value="XM_015758712.1"/>
</dbReference>
<dbReference type="RefSeq" id="XP_015614199.1">
    <property type="nucleotide sequence ID" value="XM_015758713.1"/>
</dbReference>
<dbReference type="SMR" id="Q0IXP9"/>
<dbReference type="FunCoup" id="Q0IXP9">
    <property type="interactions" value="1564"/>
</dbReference>
<dbReference type="STRING" id="39947.Q0IXP9"/>
<dbReference type="ESTHER" id="orysa-q7xem8">
    <property type="family name" value="ACPH_Peptidase_S9"/>
</dbReference>
<dbReference type="PaxDb" id="39947-Q0IXP9"/>
<dbReference type="KEGG" id="dosa:Os10g0415600"/>
<dbReference type="eggNOG" id="KOG2100">
    <property type="taxonomic scope" value="Eukaryota"/>
</dbReference>
<dbReference type="HOGENOM" id="CLU_014230_1_1_1"/>
<dbReference type="InParanoid" id="Q0IXP9"/>
<dbReference type="OrthoDB" id="416344at2759"/>
<dbReference type="Proteomes" id="UP000000763">
    <property type="component" value="Chromosome 10"/>
</dbReference>
<dbReference type="Proteomes" id="UP000007752">
    <property type="component" value="Chromosome 10"/>
</dbReference>
<dbReference type="Proteomes" id="UP000059680">
    <property type="component" value="Chromosome 10"/>
</dbReference>
<dbReference type="GO" id="GO:0005737">
    <property type="term" value="C:cytoplasm"/>
    <property type="evidence" value="ECO:0007669"/>
    <property type="project" value="UniProtKB-SubCell"/>
</dbReference>
<dbReference type="GO" id="GO:0008242">
    <property type="term" value="F:omega peptidase activity"/>
    <property type="evidence" value="ECO:0007669"/>
    <property type="project" value="UniProtKB-EC"/>
</dbReference>
<dbReference type="GO" id="GO:0004252">
    <property type="term" value="F:serine-type endopeptidase activity"/>
    <property type="evidence" value="ECO:0000318"/>
    <property type="project" value="GO_Central"/>
</dbReference>
<dbReference type="GO" id="GO:0006508">
    <property type="term" value="P:proteolysis"/>
    <property type="evidence" value="ECO:0007669"/>
    <property type="project" value="InterPro"/>
</dbReference>
<dbReference type="FunFam" id="3.40.50.1820:FF:000146">
    <property type="entry name" value="Acylamino-acid-releasing enzyme"/>
    <property type="match status" value="1"/>
</dbReference>
<dbReference type="Gene3D" id="3.40.50.1820">
    <property type="entry name" value="alpha/beta hydrolase"/>
    <property type="match status" value="1"/>
</dbReference>
<dbReference type="InterPro" id="IPR045550">
    <property type="entry name" value="AARE_N"/>
</dbReference>
<dbReference type="InterPro" id="IPR029058">
    <property type="entry name" value="AB_hydrolase_fold"/>
</dbReference>
<dbReference type="InterPro" id="IPR011659">
    <property type="entry name" value="PD40"/>
</dbReference>
<dbReference type="InterPro" id="IPR002471">
    <property type="entry name" value="Pept_S9_AS"/>
</dbReference>
<dbReference type="InterPro" id="IPR001375">
    <property type="entry name" value="Peptidase_S9_cat"/>
</dbReference>
<dbReference type="PANTHER" id="PTHR42776:SF4">
    <property type="entry name" value="ACYLAMINO-ACID-RELEASING ENZYME"/>
    <property type="match status" value="1"/>
</dbReference>
<dbReference type="PANTHER" id="PTHR42776">
    <property type="entry name" value="SERINE PEPTIDASE S9 FAMILY MEMBER"/>
    <property type="match status" value="1"/>
</dbReference>
<dbReference type="Pfam" id="PF19283">
    <property type="entry name" value="APEH_N"/>
    <property type="match status" value="1"/>
</dbReference>
<dbReference type="Pfam" id="PF07676">
    <property type="entry name" value="PD40"/>
    <property type="match status" value="1"/>
</dbReference>
<dbReference type="Pfam" id="PF00326">
    <property type="entry name" value="Peptidase_S9"/>
    <property type="match status" value="1"/>
</dbReference>
<dbReference type="SUPFAM" id="SSF53474">
    <property type="entry name" value="alpha/beta-Hydrolases"/>
    <property type="match status" value="1"/>
</dbReference>
<dbReference type="SUPFAM" id="SSF82171">
    <property type="entry name" value="DPP6 N-terminal domain-like"/>
    <property type="match status" value="1"/>
</dbReference>
<dbReference type="PROSITE" id="PS00708">
    <property type="entry name" value="PRO_ENDOPEP_SER"/>
    <property type="match status" value="1"/>
</dbReference>
<sequence>MATTQASEAATEKGLPLGMDVSMVDEYASQSKLLQEFVKIPTIGNAWIFNSKTENTSRAIVSVGQTDLLANKKRSFLLNSHISKNSSNSVDFQWSPFPIEMSGVSAVIPSPSGRKLLLIRNSEDDSPTKLEVWGPCQLENEIHIAQSVHGSLYVDEWFEGISWNQEETLVAYVAEEPPQPKPEFNDSGYKKAGSSEKDCKSWKGKGDWEETWGETYSKKRIPALFVVNISSGEVRAVKGIPRTLSVGQVIWAPSSSHSLVFVAWSSDNGYQKTPRKLGIKYCFNRPCALYAVPDPFMEEADKPSLNVSKGETAPTTKLTSELSSAFFPRFSPDGKYLVFISAKSAIDSGTHNATNSMHKIDWPADGKLEGLSVADVVPIVMCPQDGCFPGLYCSGILRNPWLTDGQTMILSSIWGSKEVILSVNVVSREVSRVSPQDSDYSWNVLALDKDNILAVSSSLITVPQIYYGSEVCQTGKPNQWEWQEIATPFPSPSDKISAILADHKFSILKIPISNSSNKLADGAKLPFEAIFVSWKDSATRPTIVVLHGGPHTVYPSSYSKSLAFLYSQGYNLLVVNYRGSLGFGEEALQSLPGNIGSQDVNDVLTALDFVIKKGLIDASKVAVVGGSHGGFLTTHLIGQAPGTFVAAAARNPVCNLSLMVGTTDIPEWCFVEIYGKEGKNCFSEYPSFDDLCQFHQKSPISHISKVSTPTLFLLGAQDLRVPVSNGLQYARTLKEMGVETKIIVFPEDMHGLDKPQSDFESFLNIGVWFKKHMSK</sequence>
<protein>
    <recommendedName>
        <fullName evidence="3">Acylamino-acid-releasing enzyme 1</fullName>
        <shortName evidence="3">AARE1</shortName>
        <ecNumber evidence="3">3.4.19.1</ecNumber>
    </recommendedName>
</protein>
<keyword id="KW-0963">Cytoplasm</keyword>
<keyword id="KW-0378">Hydrolase</keyword>
<keyword id="KW-1185">Reference proteome</keyword>
<evidence type="ECO:0000250" key="1">
    <source>
        <dbReference type="UniProtKB" id="Q84LM4"/>
    </source>
</evidence>
<evidence type="ECO:0000255" key="2">
    <source>
        <dbReference type="PROSITE-ProRule" id="PRU10084"/>
    </source>
</evidence>
<evidence type="ECO:0000305" key="3"/>
<evidence type="ECO:0000312" key="4">
    <source>
        <dbReference type="EMBL" id="ABB47613.1"/>
    </source>
</evidence>
<evidence type="ECO:0000312" key="5">
    <source>
        <dbReference type="EMBL" id="BAF26516.1"/>
    </source>
</evidence>
<evidence type="ECO:0000312" key="6">
    <source>
        <dbReference type="EMBL" id="EEE50961.1"/>
    </source>
</evidence>
<comment type="function">
    <text evidence="1">Catalyzes the hydrolysis of the N-terminal peptide bond of an N-acetylated peptide to generate an N-acetylated amino acid and a peptide with a free N-terminus.</text>
</comment>
<comment type="catalytic activity">
    <reaction evidence="3">
        <text>Cleavage of an N-acetyl or N-formyl amino acid from the N-terminus of a polypeptide.</text>
        <dbReference type="EC" id="3.4.19.1"/>
    </reaction>
</comment>
<comment type="subunit">
    <text evidence="1">Homotetramer.</text>
</comment>
<comment type="subcellular location">
    <subcellularLocation>
        <location evidence="1">Cytoplasm</location>
    </subcellularLocation>
</comment>
<comment type="similarity">
    <text evidence="3">Belongs to the peptidase S9C family.</text>
</comment>
<comment type="sequence caution" evidence="3">
    <conflict type="erroneous gene model prediction">
        <sequence resource="EMBL-CDS" id="ABB47613"/>
    </conflict>
</comment>
<comment type="sequence caution" evidence="3">
    <conflict type="erroneous gene model prediction">
        <sequence resource="EMBL-CDS" id="BAT10848"/>
    </conflict>
</comment>
<comment type="sequence caution" evidence="3">
    <conflict type="erroneous gene model prediction">
        <sequence resource="EMBL-CDS" id="EEE50961"/>
    </conflict>
</comment>
<organism>
    <name type="scientific">Oryza sativa subsp. japonica</name>
    <name type="common">Rice</name>
    <dbReference type="NCBI Taxonomy" id="39947"/>
    <lineage>
        <taxon>Eukaryota</taxon>
        <taxon>Viridiplantae</taxon>
        <taxon>Streptophyta</taxon>
        <taxon>Embryophyta</taxon>
        <taxon>Tracheophyta</taxon>
        <taxon>Spermatophyta</taxon>
        <taxon>Magnoliopsida</taxon>
        <taxon>Liliopsida</taxon>
        <taxon>Poales</taxon>
        <taxon>Poaceae</taxon>
        <taxon>BOP clade</taxon>
        <taxon>Oryzoideae</taxon>
        <taxon>Oryzeae</taxon>
        <taxon>Oryzinae</taxon>
        <taxon>Oryza</taxon>
        <taxon>Oryza sativa</taxon>
    </lineage>
</organism>
<gene>
    <name evidence="5" type="ordered locus">Os10g0415600</name>
    <name evidence="4" type="ordered locus">LOC_Os10g28020</name>
    <name evidence="6" type="ORF">OsJ_31520</name>
</gene>
<proteinExistence type="inferred from homology"/>
<accession>Q0IXP9</accession>
<accession>A0A0P0XU57</accession>
<accession>Q338C1</accession>
<reference key="1">
    <citation type="journal article" date="2003" name="Science">
        <title>In-depth view of structure, activity, and evolution of rice chromosome 10.</title>
        <authorList>
            <person name="Yu Y."/>
            <person name="Rambo T."/>
            <person name="Currie J."/>
            <person name="Saski C."/>
            <person name="Kim H.-R."/>
            <person name="Collura K."/>
            <person name="Thompson S."/>
            <person name="Simmons J."/>
            <person name="Yang T.-J."/>
            <person name="Nah G."/>
            <person name="Patel A.J."/>
            <person name="Thurmond S."/>
            <person name="Henry D."/>
            <person name="Oates R."/>
            <person name="Palmer M."/>
            <person name="Pries G."/>
            <person name="Gibson J."/>
            <person name="Anderson H."/>
            <person name="Paradkar M."/>
            <person name="Crane L."/>
            <person name="Dale J."/>
            <person name="Carver M.B."/>
            <person name="Wood T."/>
            <person name="Frisch D."/>
            <person name="Engler F."/>
            <person name="Soderlund C."/>
            <person name="Palmer L.E."/>
            <person name="Teytelman L."/>
            <person name="Nascimento L."/>
            <person name="De la Bastide M."/>
            <person name="Spiegel L."/>
            <person name="Ware D."/>
            <person name="O'Shaughnessy A."/>
            <person name="Dike S."/>
            <person name="Dedhia N."/>
            <person name="Preston R."/>
            <person name="Huang E."/>
            <person name="Ferraro K."/>
            <person name="Kuit K."/>
            <person name="Miller B."/>
            <person name="Zutavern T."/>
            <person name="Katzenberger F."/>
            <person name="Muller S."/>
            <person name="Balija V."/>
            <person name="Martienssen R.A."/>
            <person name="Stein L."/>
            <person name="Minx P."/>
            <person name="Johnson D."/>
            <person name="Cordum H."/>
            <person name="Mardis E."/>
            <person name="Cheng Z."/>
            <person name="Jiang J."/>
            <person name="Wilson R."/>
            <person name="McCombie W.R."/>
            <person name="Wing R.A."/>
            <person name="Yuan Q."/>
            <person name="Ouyang S."/>
            <person name="Liu J."/>
            <person name="Jones K.M."/>
            <person name="Gansberger K."/>
            <person name="Moffat K."/>
            <person name="Hill J."/>
            <person name="Tsitrin T."/>
            <person name="Overton L."/>
            <person name="Bera J."/>
            <person name="Kim M."/>
            <person name="Jin S."/>
            <person name="Tallon L."/>
            <person name="Ciecko A."/>
            <person name="Pai G."/>
            <person name="Van Aken S."/>
            <person name="Utterback T."/>
            <person name="Reidmuller S."/>
            <person name="Bormann J."/>
            <person name="Feldblyum T."/>
            <person name="Hsiao J."/>
            <person name="Zismann V."/>
            <person name="Blunt S."/>
            <person name="de Vazeille A.R."/>
            <person name="Shaffer T."/>
            <person name="Koo H."/>
            <person name="Suh B."/>
            <person name="Yang Q."/>
            <person name="Haas B."/>
            <person name="Peterson J."/>
            <person name="Pertea M."/>
            <person name="Volfovsky N."/>
            <person name="Wortman J."/>
            <person name="White O."/>
            <person name="Salzberg S.L."/>
            <person name="Fraser C.M."/>
            <person name="Buell C.R."/>
            <person name="Messing J."/>
            <person name="Song R."/>
            <person name="Fuks G."/>
            <person name="Llaca V."/>
            <person name="Kovchak S."/>
            <person name="Young S."/>
            <person name="Bowers J.E."/>
            <person name="Paterson A.H."/>
            <person name="Johns M.A."/>
            <person name="Mao L."/>
            <person name="Pan H."/>
            <person name="Dean R.A."/>
        </authorList>
    </citation>
    <scope>NUCLEOTIDE SEQUENCE [LARGE SCALE GENOMIC DNA]</scope>
    <source>
        <strain>cv. Nipponbare</strain>
    </source>
</reference>
<reference key="2">
    <citation type="journal article" date="2005" name="Nature">
        <title>The map-based sequence of the rice genome.</title>
        <authorList>
            <consortium name="International rice genome sequencing project (IRGSP)"/>
        </authorList>
    </citation>
    <scope>NUCLEOTIDE SEQUENCE [LARGE SCALE GENOMIC DNA]</scope>
    <source>
        <strain>cv. Nipponbare</strain>
    </source>
</reference>
<reference key="3">
    <citation type="journal article" date="2008" name="Nucleic Acids Res.">
        <title>The rice annotation project database (RAP-DB): 2008 update.</title>
        <authorList>
            <consortium name="The rice annotation project (RAP)"/>
        </authorList>
    </citation>
    <scope>GENOME REANNOTATION</scope>
    <source>
        <strain>cv. Nipponbare</strain>
    </source>
</reference>
<reference key="4">
    <citation type="journal article" date="2013" name="Rice">
        <title>Improvement of the Oryza sativa Nipponbare reference genome using next generation sequence and optical map data.</title>
        <authorList>
            <person name="Kawahara Y."/>
            <person name="de la Bastide M."/>
            <person name="Hamilton J.P."/>
            <person name="Kanamori H."/>
            <person name="McCombie W.R."/>
            <person name="Ouyang S."/>
            <person name="Schwartz D.C."/>
            <person name="Tanaka T."/>
            <person name="Wu J."/>
            <person name="Zhou S."/>
            <person name="Childs K.L."/>
            <person name="Davidson R.M."/>
            <person name="Lin H."/>
            <person name="Quesada-Ocampo L."/>
            <person name="Vaillancourt B."/>
            <person name="Sakai H."/>
            <person name="Lee S.S."/>
            <person name="Kim J."/>
            <person name="Numa H."/>
            <person name="Itoh T."/>
            <person name="Buell C.R."/>
            <person name="Matsumoto T."/>
        </authorList>
    </citation>
    <scope>GENOME REANNOTATION</scope>
    <source>
        <strain>cv. Nipponbare</strain>
    </source>
</reference>
<reference key="5">
    <citation type="journal article" date="2005" name="PLoS Biol.">
        <title>The genomes of Oryza sativa: a history of duplications.</title>
        <authorList>
            <person name="Yu J."/>
            <person name="Wang J."/>
            <person name="Lin W."/>
            <person name="Li S."/>
            <person name="Li H."/>
            <person name="Zhou J."/>
            <person name="Ni P."/>
            <person name="Dong W."/>
            <person name="Hu S."/>
            <person name="Zeng C."/>
            <person name="Zhang J."/>
            <person name="Zhang Y."/>
            <person name="Li R."/>
            <person name="Xu Z."/>
            <person name="Li S."/>
            <person name="Li X."/>
            <person name="Zheng H."/>
            <person name="Cong L."/>
            <person name="Lin L."/>
            <person name="Yin J."/>
            <person name="Geng J."/>
            <person name="Li G."/>
            <person name="Shi J."/>
            <person name="Liu J."/>
            <person name="Lv H."/>
            <person name="Li J."/>
            <person name="Wang J."/>
            <person name="Deng Y."/>
            <person name="Ran L."/>
            <person name="Shi X."/>
            <person name="Wang X."/>
            <person name="Wu Q."/>
            <person name="Li C."/>
            <person name="Ren X."/>
            <person name="Wang J."/>
            <person name="Wang X."/>
            <person name="Li D."/>
            <person name="Liu D."/>
            <person name="Zhang X."/>
            <person name="Ji Z."/>
            <person name="Zhao W."/>
            <person name="Sun Y."/>
            <person name="Zhang Z."/>
            <person name="Bao J."/>
            <person name="Han Y."/>
            <person name="Dong L."/>
            <person name="Ji J."/>
            <person name="Chen P."/>
            <person name="Wu S."/>
            <person name="Liu J."/>
            <person name="Xiao Y."/>
            <person name="Bu D."/>
            <person name="Tan J."/>
            <person name="Yang L."/>
            <person name="Ye C."/>
            <person name="Zhang J."/>
            <person name="Xu J."/>
            <person name="Zhou Y."/>
            <person name="Yu Y."/>
            <person name="Zhang B."/>
            <person name="Zhuang S."/>
            <person name="Wei H."/>
            <person name="Liu B."/>
            <person name="Lei M."/>
            <person name="Yu H."/>
            <person name="Li Y."/>
            <person name="Xu H."/>
            <person name="Wei S."/>
            <person name="He X."/>
            <person name="Fang L."/>
            <person name="Zhang Z."/>
            <person name="Zhang Y."/>
            <person name="Huang X."/>
            <person name="Su Z."/>
            <person name="Tong W."/>
            <person name="Li J."/>
            <person name="Tong Z."/>
            <person name="Li S."/>
            <person name="Ye J."/>
            <person name="Wang L."/>
            <person name="Fang L."/>
            <person name="Lei T."/>
            <person name="Chen C.-S."/>
            <person name="Chen H.-C."/>
            <person name="Xu Z."/>
            <person name="Li H."/>
            <person name="Huang H."/>
            <person name="Zhang F."/>
            <person name="Xu H."/>
            <person name="Li N."/>
            <person name="Zhao C."/>
            <person name="Li S."/>
            <person name="Dong L."/>
            <person name="Huang Y."/>
            <person name="Li L."/>
            <person name="Xi Y."/>
            <person name="Qi Q."/>
            <person name="Li W."/>
            <person name="Zhang B."/>
            <person name="Hu W."/>
            <person name="Zhang Y."/>
            <person name="Tian X."/>
            <person name="Jiao Y."/>
            <person name="Liang X."/>
            <person name="Jin J."/>
            <person name="Gao L."/>
            <person name="Zheng W."/>
            <person name="Hao B."/>
            <person name="Liu S.-M."/>
            <person name="Wang W."/>
            <person name="Yuan L."/>
            <person name="Cao M."/>
            <person name="McDermott J."/>
            <person name="Samudrala R."/>
            <person name="Wang J."/>
            <person name="Wong G.K.-S."/>
            <person name="Yang H."/>
        </authorList>
    </citation>
    <scope>NUCLEOTIDE SEQUENCE [LARGE SCALE GENOMIC DNA]</scope>
    <source>
        <strain>cv. Nipponbare</strain>
    </source>
</reference>